<feature type="initiator methionine" description="Removed" evidence="5">
    <location>
        <position position="1"/>
    </location>
</feature>
<feature type="chain" id="PRO_0000093191" description="Energy-dependent translational throttle protein EttA">
    <location>
        <begin position="2"/>
        <end position="555"/>
    </location>
</feature>
<feature type="domain" description="ABC transporter 1" evidence="1">
    <location>
        <begin position="6"/>
        <end position="259"/>
    </location>
</feature>
<feature type="domain" description="ABC transporter 2" evidence="1">
    <location>
        <begin position="324"/>
        <end position="550"/>
    </location>
</feature>
<feature type="region of interest" description="Arm" evidence="1 2">
    <location>
        <begin position="95"/>
        <end position="139"/>
    </location>
</feature>
<feature type="region of interest" description="PtIM" evidence="1 2">
    <location>
        <begin position="242"/>
        <end position="322"/>
    </location>
</feature>
<feature type="binding site" evidence="1">
    <location>
        <begin position="39"/>
        <end position="46"/>
    </location>
    <ligand>
        <name>ATP</name>
        <dbReference type="ChEBI" id="CHEBI:30616"/>
        <label>1</label>
    </ligand>
</feature>
<feature type="binding site" evidence="1">
    <location>
        <begin position="356"/>
        <end position="363"/>
    </location>
    <ligand>
        <name>ATP</name>
        <dbReference type="ChEBI" id="CHEBI:30616"/>
        <label>2</label>
    </ligand>
</feature>
<feature type="mutagenesis site" description="Arrests growth, inhibits tripeptide but not dipeptide formation, stably binds 70S ribosomes, probably locked in an ATP-bound form as it should not have ATPase activity, 47-fold decrease in translation; when associated with Q-470 (called EQ2)." evidence="2 3 4">
    <original>E</original>
    <variation>Q</variation>
    <location>
        <position position="188"/>
    </location>
</feature>
<feature type="mutagenesis site" description="Arrests growth, inhibits tripeptide but not dipeptide formation, stably binds 70S ribosomes, probably locked in an ATP-bound form as it should not have ATPase activity, 47-fold decrease in translation; when associated with Q-188 (EQ2)." evidence="2 3 4">
    <original>E</original>
    <variation>Q</variation>
    <location>
        <position position="470"/>
    </location>
</feature>
<feature type="strand" evidence="12">
    <location>
        <begin position="5"/>
        <end position="15"/>
    </location>
</feature>
<feature type="turn" evidence="12">
    <location>
        <begin position="16"/>
        <end position="18"/>
    </location>
</feature>
<feature type="strand" evidence="12">
    <location>
        <begin position="19"/>
        <end position="29"/>
    </location>
</feature>
<feature type="strand" evidence="12">
    <location>
        <begin position="34"/>
        <end position="39"/>
    </location>
</feature>
<feature type="helix" evidence="12">
    <location>
        <begin position="45"/>
        <end position="52"/>
    </location>
</feature>
<feature type="strand" evidence="12">
    <location>
        <begin position="60"/>
        <end position="65"/>
    </location>
</feature>
<feature type="strand" evidence="12">
    <location>
        <begin position="71"/>
        <end position="74"/>
    </location>
</feature>
<feature type="helix" evidence="12">
    <location>
        <begin position="86"/>
        <end position="93"/>
    </location>
</feature>
<feature type="helix" evidence="12">
    <location>
        <begin position="95"/>
        <end position="110"/>
    </location>
</feature>
<feature type="helix" evidence="12">
    <location>
        <begin position="118"/>
        <end position="131"/>
    </location>
</feature>
<feature type="helix" evidence="12">
    <location>
        <begin position="141"/>
        <end position="150"/>
    </location>
</feature>
<feature type="turn" evidence="12">
    <location>
        <begin position="160"/>
        <end position="162"/>
    </location>
</feature>
<feature type="helix" evidence="12">
    <location>
        <begin position="165"/>
        <end position="179"/>
    </location>
</feature>
<feature type="strand" evidence="12">
    <location>
        <begin position="182"/>
        <end position="188"/>
    </location>
</feature>
<feature type="turn" evidence="12">
    <location>
        <begin position="189"/>
        <end position="192"/>
    </location>
</feature>
<feature type="helix" evidence="12">
    <location>
        <begin position="195"/>
        <end position="207"/>
    </location>
</feature>
<feature type="strand" evidence="12">
    <location>
        <begin position="209"/>
        <end position="215"/>
    </location>
</feature>
<feature type="helix" evidence="12">
    <location>
        <begin position="219"/>
        <end position="224"/>
    </location>
</feature>
<feature type="strand" evidence="12">
    <location>
        <begin position="227"/>
        <end position="235"/>
    </location>
</feature>
<feature type="strand" evidence="12">
    <location>
        <begin position="237"/>
        <end position="242"/>
    </location>
</feature>
<feature type="helix" evidence="12">
    <location>
        <begin position="244"/>
        <end position="276"/>
    </location>
</feature>
<feature type="turn" evidence="12">
    <location>
        <begin position="287"/>
        <end position="293"/>
    </location>
</feature>
<feature type="helix" evidence="12">
    <location>
        <begin position="294"/>
        <end position="297"/>
    </location>
</feature>
<feature type="helix" evidence="12">
    <location>
        <begin position="300"/>
        <end position="305"/>
    </location>
</feature>
<feature type="helix" evidence="12">
    <location>
        <begin position="306"/>
        <end position="308"/>
    </location>
</feature>
<feature type="strand" evidence="12">
    <location>
        <begin position="309"/>
        <end position="311"/>
    </location>
</feature>
<feature type="strand" evidence="12">
    <location>
        <begin position="324"/>
        <end position="333"/>
    </location>
</feature>
<feature type="strand" evidence="12">
    <location>
        <begin position="336"/>
        <end position="346"/>
    </location>
</feature>
<feature type="strand" evidence="12">
    <location>
        <begin position="351"/>
        <end position="355"/>
    </location>
</feature>
<feature type="helix" evidence="12">
    <location>
        <begin position="362"/>
        <end position="369"/>
    </location>
</feature>
<feature type="strand" evidence="12">
    <location>
        <begin position="376"/>
        <end position="382"/>
    </location>
</feature>
<feature type="strand" evidence="12">
    <location>
        <begin position="388"/>
        <end position="391"/>
    </location>
</feature>
<feature type="helix" evidence="12">
    <location>
        <begin position="404"/>
        <end position="409"/>
    </location>
</feature>
<feature type="strand" evidence="12">
    <location>
        <begin position="413"/>
        <end position="417"/>
    </location>
</feature>
<feature type="strand" evidence="12">
    <location>
        <begin position="420"/>
        <end position="423"/>
    </location>
</feature>
<feature type="helix" evidence="12">
    <location>
        <begin position="424"/>
        <end position="429"/>
    </location>
</feature>
<feature type="helix" evidence="12">
    <location>
        <begin position="435"/>
        <end position="437"/>
    </location>
</feature>
<feature type="helix" evidence="12">
    <location>
        <begin position="442"/>
        <end position="444"/>
    </location>
</feature>
<feature type="helix" evidence="12">
    <location>
        <begin position="447"/>
        <end position="458"/>
    </location>
</feature>
<feature type="helix" evidence="12">
    <location>
        <begin position="459"/>
        <end position="461"/>
    </location>
</feature>
<feature type="strand" evidence="12">
    <location>
        <begin position="464"/>
        <end position="470"/>
    </location>
</feature>
<feature type="turn" evidence="12">
    <location>
        <begin position="471"/>
        <end position="474"/>
    </location>
</feature>
<feature type="helix" evidence="12">
    <location>
        <begin position="477"/>
        <end position="489"/>
    </location>
</feature>
<feature type="strand" evidence="12">
    <location>
        <begin position="491"/>
        <end position="497"/>
    </location>
</feature>
<feature type="helix" evidence="12">
    <location>
        <begin position="501"/>
        <end position="507"/>
    </location>
</feature>
<feature type="strand" evidence="12">
    <location>
        <begin position="509"/>
        <end position="514"/>
    </location>
</feature>
<feature type="strand" evidence="12">
    <location>
        <begin position="520"/>
        <end position="525"/>
    </location>
</feature>
<feature type="helix" evidence="12">
    <location>
        <begin position="527"/>
        <end position="538"/>
    </location>
</feature>
<feature type="strand" evidence="12">
    <location>
        <begin position="542"/>
        <end position="544"/>
    </location>
</feature>
<organism>
    <name type="scientific">Escherichia coli (strain K12)</name>
    <dbReference type="NCBI Taxonomy" id="83333"/>
    <lineage>
        <taxon>Bacteria</taxon>
        <taxon>Pseudomonadati</taxon>
        <taxon>Pseudomonadota</taxon>
        <taxon>Gammaproteobacteria</taxon>
        <taxon>Enterobacterales</taxon>
        <taxon>Enterobacteriaceae</taxon>
        <taxon>Escherichia</taxon>
    </lineage>
</organism>
<sequence length="555" mass="62443">MAQFVYTMHRVGKVVPPKRHILKNISLSFFPGAKIGVLGLNGAGKSTLLRIMAGIDKDIEGEARPQPDIKIGYLPQEPQLNPEHTVRESIEEAVSEVVNALKRLDEVYALYADPDADFDKLAAEQGRLEEIIQAHDGHNLNVQLERAADALRLPDWDAKIANLSGGERRRVALCRLLLEKPDMLLLDEPTNHLDAESVAWLERFLHDFEGTVVAITHDRYFLDNVAGWILELDRGEGIPWEGNYSSWLEQKDQRLAQEASQEAARRKSIEKELEWVRQGTKGRQSKGKARLARFEELNSTEYQKRNETNELFIPPGPRLGDKVLEVSNLRKSYGDRLLIDDLSFSIPKGAIVGIIGPNGAGKSTLFRMISGQEQPDSGTITLGETVKLASVDQFRDSMDNSKTVWEEVSGGLDIMKIGNTEMPSRAYVGRFNFKGVDQGKRVGELSGGERGRLHLAKLLQVGGNMLLLDEPTNDLDIETLRALENALLEFPGCAMVISHDRWFLDRIATHILDYQDEGKVEFFEGNFTEYEEYKKRTLGADALEPKRIKYKRIAK</sequence>
<gene>
    <name evidence="1 6" type="primary">ettA</name>
    <name type="synonym">yjjK</name>
    <name type="ordered locus">b4391</name>
    <name type="ordered locus">JW4354</name>
</gene>
<accession>P0A9W3</accession>
<accession>P37797</accession>
<accession>Q2M5S6</accession>
<comment type="function">
    <text evidence="2 3">A translation factor that gates the progression of the 70S ribosomal initiation complex (IC, containing tRNA(fMet) in the P-site) into the translation elongation cycle by using a mechanism sensitive to the ATP/ADP ratio. Binds to the 70S ribosome E-site where it modulates the state of the translating ribosome during subunit translocation. Stimulates dipeptide bond synthesis in the presence of ATP (cell in high energy state), but inhibits dipeptide synthesis in the presence of ADP (cell in low energy state), and thus may control translation in response to changing ATP levels (including during stationary phase). Following ATP hydrolysis is probably released allowing the ribosome to enter the elongation phase. ATPase activity is stimulated in the presence of ribosomes. Its specificity for the IC may be conferred by its recognition of features unique to tRNA(fMet).</text>
</comment>
<comment type="catalytic activity">
    <reaction evidence="1 2">
        <text>ATP + H2O = ADP + phosphate + H(+)</text>
        <dbReference type="Rhea" id="RHEA:13065"/>
        <dbReference type="ChEBI" id="CHEBI:15377"/>
        <dbReference type="ChEBI" id="CHEBI:15378"/>
        <dbReference type="ChEBI" id="CHEBI:30616"/>
        <dbReference type="ChEBI" id="CHEBI:43474"/>
        <dbReference type="ChEBI" id="CHEBI:456216"/>
    </reaction>
</comment>
<comment type="subunit">
    <text evidence="2 3">Monomer at concentrations found in vivo, exists in a slowly reversible monomer-homodimer equilibrium. Probably contacts ribosomal proteins L1, L5, L33 and S7, the 16S and 23S rRNA and the P-site containing tRNA(fMet).</text>
</comment>
<comment type="subcellular location">
    <subcellularLocation>
        <location evidence="1 3">Cytoplasm</location>
    </subcellularLocation>
    <text evidence="1">Associates with ribosomes and polysomes.</text>
</comment>
<comment type="induction">
    <text evidence="3">Constitutively expressed, increases in stationary phase (at protein level).</text>
</comment>
<comment type="domain">
    <text evidence="2 3">The arm domain (residues 95-139) is inserted in the first ABC transporter domain. Its deletion abrogates the growth arrest and translation inhibition effect of the double Q-188/Q-470 mutation. When deleted impairs fitness in long-term (up to 6 days) growth in stationary phase (PubMed:24389466). Probably contacts ribosomal protein L1 (PubMed:24389465).</text>
</comment>
<comment type="domain">
    <text evidence="2">The P-site tRNA interaction motif (PtIM domain, residues 242-322) probably interacts with the P-site tRNA(fMet) as well as the 23S rRNA.</text>
</comment>
<comment type="disruption phenotype">
    <text evidence="3">Not essential it can be disrupted, its absence impairs fitness in long-term (up to 6 days) growth in stationary phase.</text>
</comment>
<comment type="similarity">
    <text evidence="1 8">Belongs to the ABC transporter superfamily. ABCF family. Translational throttle EttA subfamily.</text>
</comment>
<comment type="sequence caution" evidence="9">
    <conflict type="frameshift">
        <sequence resource="EMBL-CDS" id="AAA97287"/>
    </conflict>
</comment>
<comment type="sequence caution" evidence="9">
    <conflict type="frameshift">
        <sequence resource="EMBL" id="M69185"/>
    </conflict>
</comment>
<proteinExistence type="evidence at protein level"/>
<name>ETTA_ECOLI</name>
<evidence type="ECO:0000255" key="1">
    <source>
        <dbReference type="HAMAP-Rule" id="MF_00847"/>
    </source>
</evidence>
<evidence type="ECO:0000269" key="2">
    <source>
    </source>
</evidence>
<evidence type="ECO:0000269" key="3">
    <source>
    </source>
</evidence>
<evidence type="ECO:0000269" key="4">
    <source>
    </source>
</evidence>
<evidence type="ECO:0000269" key="5">
    <source>
    </source>
</evidence>
<evidence type="ECO:0000303" key="6">
    <source>
    </source>
</evidence>
<evidence type="ECO:0000303" key="7">
    <source>
    </source>
</evidence>
<evidence type="ECO:0000303" key="8">
    <source>
    </source>
</evidence>
<evidence type="ECO:0000305" key="9"/>
<evidence type="ECO:0007744" key="10">
    <source>
        <dbReference type="PDB" id="3J5S"/>
    </source>
</evidence>
<evidence type="ECO:0007744" key="11">
    <source>
        <dbReference type="PDB" id="4FIN"/>
    </source>
</evidence>
<evidence type="ECO:0007829" key="12">
    <source>
        <dbReference type="PDB" id="4FIN"/>
    </source>
</evidence>
<keyword id="KW-0002">3D-structure</keyword>
<keyword id="KW-0067">ATP-binding</keyword>
<keyword id="KW-0963">Cytoplasm</keyword>
<keyword id="KW-0903">Direct protein sequencing</keyword>
<keyword id="KW-0378">Hydrolase</keyword>
<keyword id="KW-0547">Nucleotide-binding</keyword>
<keyword id="KW-0648">Protein biosynthesis</keyword>
<keyword id="KW-1185">Reference proteome</keyword>
<keyword id="KW-0677">Repeat</keyword>
<keyword id="KW-0694">RNA-binding</keyword>
<keyword id="KW-0699">rRNA-binding</keyword>
<keyword id="KW-0810">Translation regulation</keyword>
<keyword id="KW-0820">tRNA-binding</keyword>
<protein>
    <recommendedName>
        <fullName evidence="1 6">Energy-dependent translational throttle protein EttA</fullName>
        <ecNumber evidence="1 2">3.6.1.-</ecNumber>
    </recommendedName>
    <alternativeName>
        <fullName evidence="1 7">Translational regulatory factor EttA</fullName>
    </alternativeName>
</protein>
<dbReference type="EC" id="3.6.1.-" evidence="1 2"/>
<dbReference type="EMBL" id="U14003">
    <property type="protein sequence ID" value="AAA97287.1"/>
    <property type="status" value="ALT_FRAME"/>
    <property type="molecule type" value="Genomic_DNA"/>
</dbReference>
<dbReference type="EMBL" id="U00096">
    <property type="protein sequence ID" value="AAC77344.1"/>
    <property type="molecule type" value="Genomic_DNA"/>
</dbReference>
<dbReference type="EMBL" id="AP009048">
    <property type="protein sequence ID" value="BAE78380.1"/>
    <property type="molecule type" value="Genomic_DNA"/>
</dbReference>
<dbReference type="EMBL" id="M69185">
    <property type="status" value="NOT_ANNOTATED_CDS"/>
    <property type="molecule type" value="Genomic_DNA"/>
</dbReference>
<dbReference type="PIR" id="F65254">
    <property type="entry name" value="F65254"/>
</dbReference>
<dbReference type="RefSeq" id="NP_418808.1">
    <property type="nucleotide sequence ID" value="NC_000913.3"/>
</dbReference>
<dbReference type="RefSeq" id="WP_000046749.1">
    <property type="nucleotide sequence ID" value="NZ_STEB01000033.1"/>
</dbReference>
<dbReference type="PDB" id="3J5S">
    <property type="method" value="EM"/>
    <property type="resolution" value="7.50 A"/>
    <property type="chains" value="D=1-555"/>
</dbReference>
<dbReference type="PDB" id="4FIN">
    <property type="method" value="X-ray"/>
    <property type="resolution" value="2.40 A"/>
    <property type="chains" value="A/B=1-555"/>
</dbReference>
<dbReference type="PDBsum" id="3J5S"/>
<dbReference type="PDBsum" id="4FIN"/>
<dbReference type="EMDB" id="EMD-5784"/>
<dbReference type="EMDB" id="EMD-5785"/>
<dbReference type="EMDB" id="EMD-5786"/>
<dbReference type="EMDB" id="EMD-5841"/>
<dbReference type="EMDB" id="EMD-5842"/>
<dbReference type="EMDB" id="EMD-5843"/>
<dbReference type="SMR" id="P0A9W3"/>
<dbReference type="BioGRID" id="4260798">
    <property type="interactions" value="30"/>
</dbReference>
<dbReference type="BioGRID" id="853186">
    <property type="interactions" value="1"/>
</dbReference>
<dbReference type="DIP" id="DIP-48138N"/>
<dbReference type="FunCoup" id="P0A9W3">
    <property type="interactions" value="187"/>
</dbReference>
<dbReference type="IntAct" id="P0A9W3">
    <property type="interactions" value="13"/>
</dbReference>
<dbReference type="STRING" id="511145.b4391"/>
<dbReference type="jPOST" id="P0A9W3"/>
<dbReference type="PaxDb" id="511145-b4391"/>
<dbReference type="EnsemblBacteria" id="AAC77344">
    <property type="protein sequence ID" value="AAC77344"/>
    <property type="gene ID" value="b4391"/>
</dbReference>
<dbReference type="GeneID" id="93777454"/>
<dbReference type="GeneID" id="948909"/>
<dbReference type="KEGG" id="ecj:JW4354"/>
<dbReference type="KEGG" id="eco:b4391"/>
<dbReference type="KEGG" id="ecoc:C3026_23730"/>
<dbReference type="PATRIC" id="fig|1411691.4.peg.2293"/>
<dbReference type="EchoBASE" id="EB2247"/>
<dbReference type="eggNOG" id="COG0488">
    <property type="taxonomic scope" value="Bacteria"/>
</dbReference>
<dbReference type="HOGENOM" id="CLU_000604_36_0_6"/>
<dbReference type="InParanoid" id="P0A9W3"/>
<dbReference type="OMA" id="VSYKPQY"/>
<dbReference type="OrthoDB" id="9762051at2"/>
<dbReference type="PhylomeDB" id="P0A9W3"/>
<dbReference type="BioCyc" id="EcoCyc:YJJK-MONOMER"/>
<dbReference type="EvolutionaryTrace" id="P0A9W3"/>
<dbReference type="PRO" id="PR:P0A9W3"/>
<dbReference type="Proteomes" id="UP000000625">
    <property type="component" value="Chromosome"/>
</dbReference>
<dbReference type="GO" id="GO:0005737">
    <property type="term" value="C:cytoplasm"/>
    <property type="evidence" value="ECO:0007669"/>
    <property type="project" value="UniProtKB-SubCell"/>
</dbReference>
<dbReference type="GO" id="GO:0005524">
    <property type="term" value="F:ATP binding"/>
    <property type="evidence" value="ECO:0007669"/>
    <property type="project" value="UniProtKB-UniRule"/>
</dbReference>
<dbReference type="GO" id="GO:0016887">
    <property type="term" value="F:ATP hydrolysis activity"/>
    <property type="evidence" value="ECO:0000314"/>
    <property type="project" value="EcoCyc"/>
</dbReference>
<dbReference type="GO" id="GO:0043022">
    <property type="term" value="F:ribosome binding"/>
    <property type="evidence" value="ECO:0000315"/>
    <property type="project" value="EcoCyc"/>
</dbReference>
<dbReference type="GO" id="GO:0019843">
    <property type="term" value="F:rRNA binding"/>
    <property type="evidence" value="ECO:0007669"/>
    <property type="project" value="UniProtKB-UniRule"/>
</dbReference>
<dbReference type="GO" id="GO:0000049">
    <property type="term" value="F:tRNA binding"/>
    <property type="evidence" value="ECO:0007669"/>
    <property type="project" value="UniProtKB-UniRule"/>
</dbReference>
<dbReference type="GO" id="GO:0045900">
    <property type="term" value="P:negative regulation of translational elongation"/>
    <property type="evidence" value="ECO:0000314"/>
    <property type="project" value="EcoCyc"/>
</dbReference>
<dbReference type="GO" id="GO:0006412">
    <property type="term" value="P:translation"/>
    <property type="evidence" value="ECO:0007669"/>
    <property type="project" value="UniProtKB-KW"/>
</dbReference>
<dbReference type="CDD" id="cd03221">
    <property type="entry name" value="ABCF_EF-3"/>
    <property type="match status" value="2"/>
</dbReference>
<dbReference type="FunFam" id="3.40.50.300:FF:000183">
    <property type="entry name" value="ABC transporter ATP-binding protein yjjK"/>
    <property type="match status" value="1"/>
</dbReference>
<dbReference type="FunFam" id="3.40.50.300:FF:000011">
    <property type="entry name" value="Putative ABC transporter ATP-binding component"/>
    <property type="match status" value="1"/>
</dbReference>
<dbReference type="Gene3D" id="3.40.50.300">
    <property type="entry name" value="P-loop containing nucleotide triphosphate hydrolases"/>
    <property type="match status" value="2"/>
</dbReference>
<dbReference type="HAMAP" id="MF_00847">
    <property type="entry name" value="EttA"/>
    <property type="match status" value="1"/>
</dbReference>
<dbReference type="InterPro" id="IPR003593">
    <property type="entry name" value="AAA+_ATPase"/>
</dbReference>
<dbReference type="InterPro" id="IPR032781">
    <property type="entry name" value="ABC_tran_Xtn"/>
</dbReference>
<dbReference type="InterPro" id="IPR003439">
    <property type="entry name" value="ABC_transporter-like_ATP-bd"/>
</dbReference>
<dbReference type="InterPro" id="IPR017871">
    <property type="entry name" value="ABC_transporter-like_CS"/>
</dbReference>
<dbReference type="InterPro" id="IPR022374">
    <property type="entry name" value="EttA"/>
</dbReference>
<dbReference type="InterPro" id="IPR027417">
    <property type="entry name" value="P-loop_NTPase"/>
</dbReference>
<dbReference type="NCBIfam" id="TIGR03719">
    <property type="entry name" value="ABC_ABC_ChvD"/>
    <property type="match status" value="1"/>
</dbReference>
<dbReference type="NCBIfam" id="NF008775">
    <property type="entry name" value="PRK11819.1"/>
    <property type="match status" value="1"/>
</dbReference>
<dbReference type="PANTHER" id="PTHR43858:SF1">
    <property type="entry name" value="ABC TRANSPORTER-RELATED PROTEIN"/>
    <property type="match status" value="1"/>
</dbReference>
<dbReference type="PANTHER" id="PTHR43858">
    <property type="entry name" value="ENERGY-DEPENDENT TRANSLATIONAL THROTTLE PROTEIN ETTA"/>
    <property type="match status" value="1"/>
</dbReference>
<dbReference type="Pfam" id="PF00005">
    <property type="entry name" value="ABC_tran"/>
    <property type="match status" value="2"/>
</dbReference>
<dbReference type="Pfam" id="PF12848">
    <property type="entry name" value="ABC_tran_Xtn"/>
    <property type="match status" value="1"/>
</dbReference>
<dbReference type="SMART" id="SM00382">
    <property type="entry name" value="AAA"/>
    <property type="match status" value="2"/>
</dbReference>
<dbReference type="SUPFAM" id="SSF52540">
    <property type="entry name" value="P-loop containing nucleoside triphosphate hydrolases"/>
    <property type="match status" value="2"/>
</dbReference>
<dbReference type="PROSITE" id="PS00211">
    <property type="entry name" value="ABC_TRANSPORTER_1"/>
    <property type="match status" value="1"/>
</dbReference>
<dbReference type="PROSITE" id="PS50893">
    <property type="entry name" value="ABC_TRANSPORTER_2"/>
    <property type="match status" value="2"/>
</dbReference>
<reference key="1">
    <citation type="journal article" date="1995" name="Nucleic Acids Res.">
        <title>Analysis of the Escherichia coli genome VI: DNA sequence of the region from 92.8 through 100 minutes.</title>
        <authorList>
            <person name="Burland V.D."/>
            <person name="Plunkett G. III"/>
            <person name="Sofia H.J."/>
            <person name="Daniels D.L."/>
            <person name="Blattner F.R."/>
        </authorList>
    </citation>
    <scope>NUCLEOTIDE SEQUENCE [LARGE SCALE GENOMIC DNA]</scope>
    <source>
        <strain>K12 / MG1655 / ATCC 47076</strain>
    </source>
</reference>
<reference key="2">
    <citation type="journal article" date="1997" name="Science">
        <title>The complete genome sequence of Escherichia coli K-12.</title>
        <authorList>
            <person name="Blattner F.R."/>
            <person name="Plunkett G. III"/>
            <person name="Bloch C.A."/>
            <person name="Perna N.T."/>
            <person name="Burland V."/>
            <person name="Riley M."/>
            <person name="Collado-Vides J."/>
            <person name="Glasner J.D."/>
            <person name="Rode C.K."/>
            <person name="Mayhew G.F."/>
            <person name="Gregor J."/>
            <person name="Davis N.W."/>
            <person name="Kirkpatrick H.A."/>
            <person name="Goeden M.A."/>
            <person name="Rose D.J."/>
            <person name="Mau B."/>
            <person name="Shao Y."/>
        </authorList>
    </citation>
    <scope>NUCLEOTIDE SEQUENCE [LARGE SCALE GENOMIC DNA]</scope>
    <scope>SEQUENCE REVISION TO C-TERMINUS</scope>
    <source>
        <strain>K12 / MG1655 / ATCC 47076</strain>
    </source>
</reference>
<reference key="3">
    <citation type="journal article" date="2006" name="Mol. Syst. Biol.">
        <title>Highly accurate genome sequences of Escherichia coli K-12 strains MG1655 and W3110.</title>
        <authorList>
            <person name="Hayashi K."/>
            <person name="Morooka N."/>
            <person name="Yamamoto Y."/>
            <person name="Fujita K."/>
            <person name="Isono K."/>
            <person name="Choi S."/>
            <person name="Ohtsubo E."/>
            <person name="Baba T."/>
            <person name="Wanner B.L."/>
            <person name="Mori H."/>
            <person name="Horiuchi T."/>
        </authorList>
    </citation>
    <scope>NUCLEOTIDE SEQUENCE [LARGE SCALE GENOMIC DNA]</scope>
    <source>
        <strain>K12 / W3110 / ATCC 27325 / DSM 5911</strain>
    </source>
</reference>
<reference key="4">
    <citation type="journal article" date="1991" name="J. Bacteriol.">
        <title>Murein-metabolizing enzymes from Escherichia coli: sequence analysis and controlled overexpression of the slt gene, which encodes the soluble lytic transglycosylase.</title>
        <authorList>
            <person name="Engel H."/>
            <person name="Kazemier B."/>
            <person name="Keck W."/>
        </authorList>
    </citation>
    <scope>NUCLEOTIDE SEQUENCE [GENOMIC DNA] OF 1-80</scope>
</reference>
<reference key="5">
    <citation type="journal article" date="1997" name="Electrophoresis">
        <title>Comparing the predicted and observed properties of proteins encoded in the genome of Escherichia coli K-12.</title>
        <authorList>
            <person name="Link A.J."/>
            <person name="Robison K."/>
            <person name="Church G.M."/>
        </authorList>
    </citation>
    <scope>PROTEIN SEQUENCE OF 2-12</scope>
    <source>
        <strain>K12 / EMG2</strain>
    </source>
</reference>
<reference key="6">
    <citation type="journal article" date="1999" name="Electrophoresis">
        <title>Enrichment of low abundance proteins of Escherichia coli by hydroxyapatite chromatography.</title>
        <authorList>
            <person name="Fountoulakis M."/>
            <person name="Takacs M.-F."/>
            <person name="Berndt P."/>
            <person name="Langen H."/>
            <person name="Takacs B."/>
        </authorList>
    </citation>
    <scope>IDENTIFICATION BY MASS SPECTROMETRY</scope>
    <source>
        <strain>B / BL21</strain>
    </source>
</reference>
<reference key="7">
    <citation type="journal article" date="2019" name="J. Mol. Biol.">
        <title>ABCF ATPases involved in protein synthesis, ribosome assembly and antibiotic resistance: structural and functional diversification across the tree of life.</title>
        <authorList>
            <person name="Murina V."/>
            <person name="Kasari M."/>
            <person name="Takada H."/>
            <person name="Hinnu M."/>
            <person name="Saha C.K."/>
            <person name="Grimshaw J.W."/>
            <person name="Seki T."/>
            <person name="Reith M."/>
            <person name="Putrins M."/>
            <person name="Tenson T."/>
            <person name="Strahl H."/>
            <person name="Hauryliuk V."/>
            <person name="Atkinson G.C."/>
        </authorList>
    </citation>
    <scope>FAMILY</scope>
    <scope>MUTAGENESIS OF GLU-188 AND GLU-470</scope>
    <source>
        <strain>K12 / BW25113</strain>
    </source>
</reference>
<reference evidence="11" key="8">
    <citation type="journal article" date="2014" name="Nat. Struct. Mol. Biol.">
        <title>The ABC-F protein EttA gates ribosome entry into the translation elongation cycle.</title>
        <authorList>
            <person name="Boel G."/>
            <person name="Smith P.C."/>
            <person name="Ning W."/>
            <person name="Englander M.T."/>
            <person name="Chen B."/>
            <person name="Hashem Y."/>
            <person name="Testa A.J."/>
            <person name="Fischer J.J."/>
            <person name="Wieden H.J."/>
            <person name="Frank J."/>
            <person name="Gonzalez R.L. Jr."/>
            <person name="Hunt J.F."/>
        </authorList>
    </citation>
    <scope>X-RAY CRYSTALLOGRAPHY (2.4 ANGSTROMS)</scope>
    <scope>FUNCTION</scope>
    <scope>SUBUNIT</scope>
    <scope>SUBCELLULAR LOCATION</scope>
    <scope>INDUCTION</scope>
    <scope>DOMAIN</scope>
    <scope>DISRUPTION PHENOTYPE</scope>
    <scope>MUTAGENESIS OF GLU-188 AND GLU-470</scope>
    <source>
        <strain>K12 / MG1655 / ATCC 47076</strain>
    </source>
</reference>
<reference evidence="10" key="9">
    <citation type="journal article" date="2014" name="Nat. Struct. Mol. Biol.">
        <title>EttA regulates translation by binding the ribosomal E site and restricting ribosome-tRNA dynamics.</title>
        <authorList>
            <person name="Chen B."/>
            <person name="Boel G."/>
            <person name="Hashem Y."/>
            <person name="Ning W."/>
            <person name="Fei J."/>
            <person name="Wang C."/>
            <person name="Gonzalez R.L. Jr."/>
            <person name="Hunt J.F."/>
            <person name="Frank J."/>
        </authorList>
    </citation>
    <scope>STRUCTURE BY ELECTRON MICROSCOPY (7.5 ANGSTROMS) IN COMPLEX WITH 70S RIBOSOMES</scope>
    <scope>FUNCTION</scope>
    <scope>SUBUNIT</scope>
    <scope>DOMAIN</scope>
    <scope>MUTAGENESIS OF GLU-188 AND GLU-470</scope>
    <source>
        <strain>K12 / MG1655 / ATCC 47076</strain>
    </source>
</reference>
<reference key="10">
    <citation type="journal article" date="2014" name="Nat. Struct. Mol. Biol.">
        <title>The ABCs of the ribosome.</title>
        <authorList>
            <person name="Fredrick K."/>
            <person name="Ibba M."/>
        </authorList>
    </citation>
    <scope>COMMENT</scope>
</reference>